<accession>P29543</accession>
<comment type="function">
    <text evidence="2">GTP hydrolase that promotes the GTP-dependent binding of aminoacyl-tRNA to the A-site of ribosomes during protein biosynthesis.</text>
</comment>
<comment type="catalytic activity">
    <reaction evidence="2">
        <text>GTP + H2O = GDP + phosphate + H(+)</text>
        <dbReference type="Rhea" id="RHEA:19669"/>
        <dbReference type="ChEBI" id="CHEBI:15377"/>
        <dbReference type="ChEBI" id="CHEBI:15378"/>
        <dbReference type="ChEBI" id="CHEBI:37565"/>
        <dbReference type="ChEBI" id="CHEBI:43474"/>
        <dbReference type="ChEBI" id="CHEBI:58189"/>
        <dbReference type="EC" id="3.6.5.3"/>
    </reaction>
    <physiologicalReaction direction="left-to-right" evidence="2">
        <dbReference type="Rhea" id="RHEA:19670"/>
    </physiologicalReaction>
</comment>
<comment type="subunit">
    <text evidence="2">Monomer.</text>
</comment>
<comment type="subcellular location">
    <subcellularLocation>
        <location evidence="2">Cytoplasm</location>
    </subcellularLocation>
</comment>
<comment type="similarity">
    <text evidence="2">Belongs to the TRAFAC class translation factor GTPase superfamily. Classic translation factor GTPase family. EF-Tu/EF-1A subfamily.</text>
</comment>
<keyword id="KW-0963">Cytoplasm</keyword>
<keyword id="KW-0251">Elongation factor</keyword>
<keyword id="KW-0342">GTP-binding</keyword>
<keyword id="KW-0378">Hydrolase</keyword>
<keyword id="KW-0460">Magnesium</keyword>
<keyword id="KW-0479">Metal-binding</keyword>
<keyword id="KW-0547">Nucleotide-binding</keyword>
<keyword id="KW-0648">Protein biosynthesis</keyword>
<name>EFTU2_STRRA</name>
<evidence type="ECO:0000250" key="1"/>
<evidence type="ECO:0000255" key="2">
    <source>
        <dbReference type="HAMAP-Rule" id="MF_00118"/>
    </source>
</evidence>
<proteinExistence type="inferred from homology"/>
<organism>
    <name type="scientific">Streptomyces ramocissimus</name>
    <dbReference type="NCBI Taxonomy" id="1925"/>
    <lineage>
        <taxon>Bacteria</taxon>
        <taxon>Bacillati</taxon>
        <taxon>Actinomycetota</taxon>
        <taxon>Actinomycetes</taxon>
        <taxon>Kitasatosporales</taxon>
        <taxon>Streptomycetaceae</taxon>
        <taxon>Streptomyces</taxon>
    </lineage>
</organism>
<reference key="1">
    <citation type="journal article" date="1994" name="Microbiology">
        <title>Three tuf-like genes in the kirromycin producer Streptomyces ramocissimus.</title>
        <authorList>
            <person name="Vijgenboom E."/>
            <person name="Woudt L.P."/>
            <person name="Heinstra P.W.H."/>
            <person name="Rietveld K."/>
            <person name="van Haarlem J."/>
            <person name="van Wezel G.P."/>
            <person name="Shochat S."/>
            <person name="Bosch L."/>
        </authorList>
    </citation>
    <scope>NUCLEOTIDE SEQUENCE [GENOMIC DNA]</scope>
</reference>
<protein>
    <recommendedName>
        <fullName evidence="2">Elongation factor Tu-2</fullName>
        <shortName evidence="2">EF-Tu-2</shortName>
        <ecNumber evidence="2">3.6.5.3</ecNumber>
    </recommendedName>
</protein>
<sequence>MAKAKFQRTKPHVNIGTIGHIDHGKTTLTAAITKVLHDRFPDLNPFTPFDQIDKAPEERQRGITISIAHVEYQTEARHYAHVDCPGHADYIKNMITGAAQMDGAILVVAATDGPMPQTKEHVLLARQVGVPYIVVALNKTDMVDDEEILELVELEVRELLTEYEFPGDDVPVVKVSALRALEGDPRWTRSVLELLDAVDEFVPEPVRDVDRPFLMPIEDVFTITGRGTVVTGRIERGTLNVNTEVEIIGIHEQRTRTTVTGIEMFRKLLDEGRAGENVGLLLRGVKREQVERGQVVIRPGSVTPHTQFEAQAYILSKDEGGRHTPFFENYRPQFYFRTTDVTGVVTLPKGTEMVMPGDNTAMHVQLIQPIAMEEGLKFAIREGGRTVGAGQVTRIVK</sequence>
<dbReference type="EC" id="3.6.5.3" evidence="2"/>
<dbReference type="EMBL" id="X67058">
    <property type="protein sequence ID" value="CAA47443.1"/>
    <property type="molecule type" value="Genomic_DNA"/>
</dbReference>
<dbReference type="PIR" id="S23909">
    <property type="entry name" value="S23909"/>
</dbReference>
<dbReference type="SMR" id="P29543"/>
<dbReference type="GO" id="GO:0005829">
    <property type="term" value="C:cytosol"/>
    <property type="evidence" value="ECO:0007669"/>
    <property type="project" value="TreeGrafter"/>
</dbReference>
<dbReference type="GO" id="GO:0005525">
    <property type="term" value="F:GTP binding"/>
    <property type="evidence" value="ECO:0007669"/>
    <property type="project" value="UniProtKB-UniRule"/>
</dbReference>
<dbReference type="GO" id="GO:0003924">
    <property type="term" value="F:GTPase activity"/>
    <property type="evidence" value="ECO:0007669"/>
    <property type="project" value="InterPro"/>
</dbReference>
<dbReference type="GO" id="GO:0003746">
    <property type="term" value="F:translation elongation factor activity"/>
    <property type="evidence" value="ECO:0007669"/>
    <property type="project" value="UniProtKB-UniRule"/>
</dbReference>
<dbReference type="CDD" id="cd01884">
    <property type="entry name" value="EF_Tu"/>
    <property type="match status" value="1"/>
</dbReference>
<dbReference type="CDD" id="cd03697">
    <property type="entry name" value="EFTU_II"/>
    <property type="match status" value="1"/>
</dbReference>
<dbReference type="CDD" id="cd03707">
    <property type="entry name" value="EFTU_III"/>
    <property type="match status" value="1"/>
</dbReference>
<dbReference type="FunFam" id="2.40.30.10:FF:000001">
    <property type="entry name" value="Elongation factor Tu"/>
    <property type="match status" value="1"/>
</dbReference>
<dbReference type="FunFam" id="3.40.50.300:FF:000003">
    <property type="entry name" value="Elongation factor Tu"/>
    <property type="match status" value="1"/>
</dbReference>
<dbReference type="Gene3D" id="3.40.50.300">
    <property type="entry name" value="P-loop containing nucleotide triphosphate hydrolases"/>
    <property type="match status" value="1"/>
</dbReference>
<dbReference type="Gene3D" id="2.40.30.10">
    <property type="entry name" value="Translation factors"/>
    <property type="match status" value="2"/>
</dbReference>
<dbReference type="HAMAP" id="MF_00118_B">
    <property type="entry name" value="EF_Tu_B"/>
    <property type="match status" value="1"/>
</dbReference>
<dbReference type="InterPro" id="IPR041709">
    <property type="entry name" value="EF-Tu_GTP-bd"/>
</dbReference>
<dbReference type="InterPro" id="IPR050055">
    <property type="entry name" value="EF-Tu_GTPase"/>
</dbReference>
<dbReference type="InterPro" id="IPR004161">
    <property type="entry name" value="EFTu-like_2"/>
</dbReference>
<dbReference type="InterPro" id="IPR033720">
    <property type="entry name" value="EFTU_2"/>
</dbReference>
<dbReference type="InterPro" id="IPR031157">
    <property type="entry name" value="G_TR_CS"/>
</dbReference>
<dbReference type="InterPro" id="IPR027417">
    <property type="entry name" value="P-loop_NTPase"/>
</dbReference>
<dbReference type="InterPro" id="IPR005225">
    <property type="entry name" value="Small_GTP-bd"/>
</dbReference>
<dbReference type="InterPro" id="IPR000795">
    <property type="entry name" value="T_Tr_GTP-bd_dom"/>
</dbReference>
<dbReference type="InterPro" id="IPR009000">
    <property type="entry name" value="Transl_B-barrel_sf"/>
</dbReference>
<dbReference type="InterPro" id="IPR009001">
    <property type="entry name" value="Transl_elong_EF1A/Init_IF2_C"/>
</dbReference>
<dbReference type="InterPro" id="IPR004541">
    <property type="entry name" value="Transl_elong_EFTu/EF1A_bac/org"/>
</dbReference>
<dbReference type="InterPro" id="IPR004160">
    <property type="entry name" value="Transl_elong_EFTu/EF1A_C"/>
</dbReference>
<dbReference type="NCBIfam" id="TIGR00485">
    <property type="entry name" value="EF-Tu"/>
    <property type="match status" value="1"/>
</dbReference>
<dbReference type="NCBIfam" id="NF000766">
    <property type="entry name" value="PRK00049.1"/>
    <property type="match status" value="1"/>
</dbReference>
<dbReference type="NCBIfam" id="NF009372">
    <property type="entry name" value="PRK12735.1"/>
    <property type="match status" value="1"/>
</dbReference>
<dbReference type="NCBIfam" id="NF009373">
    <property type="entry name" value="PRK12736.1"/>
    <property type="match status" value="1"/>
</dbReference>
<dbReference type="NCBIfam" id="TIGR00231">
    <property type="entry name" value="small_GTP"/>
    <property type="match status" value="1"/>
</dbReference>
<dbReference type="PANTHER" id="PTHR43721:SF22">
    <property type="entry name" value="ELONGATION FACTOR TU, MITOCHONDRIAL"/>
    <property type="match status" value="1"/>
</dbReference>
<dbReference type="PANTHER" id="PTHR43721">
    <property type="entry name" value="ELONGATION FACTOR TU-RELATED"/>
    <property type="match status" value="1"/>
</dbReference>
<dbReference type="Pfam" id="PF00009">
    <property type="entry name" value="GTP_EFTU"/>
    <property type="match status" value="1"/>
</dbReference>
<dbReference type="Pfam" id="PF03144">
    <property type="entry name" value="GTP_EFTU_D2"/>
    <property type="match status" value="1"/>
</dbReference>
<dbReference type="Pfam" id="PF03143">
    <property type="entry name" value="GTP_EFTU_D3"/>
    <property type="match status" value="1"/>
</dbReference>
<dbReference type="PRINTS" id="PR00315">
    <property type="entry name" value="ELONGATNFCT"/>
</dbReference>
<dbReference type="SUPFAM" id="SSF50465">
    <property type="entry name" value="EF-Tu/eEF-1alpha/eIF2-gamma C-terminal domain"/>
    <property type="match status" value="1"/>
</dbReference>
<dbReference type="SUPFAM" id="SSF52540">
    <property type="entry name" value="P-loop containing nucleoside triphosphate hydrolases"/>
    <property type="match status" value="1"/>
</dbReference>
<dbReference type="SUPFAM" id="SSF50447">
    <property type="entry name" value="Translation proteins"/>
    <property type="match status" value="1"/>
</dbReference>
<dbReference type="PROSITE" id="PS00301">
    <property type="entry name" value="G_TR_1"/>
    <property type="match status" value="1"/>
</dbReference>
<dbReference type="PROSITE" id="PS51722">
    <property type="entry name" value="G_TR_2"/>
    <property type="match status" value="1"/>
</dbReference>
<gene>
    <name evidence="2" type="primary">tuf2</name>
</gene>
<feature type="chain" id="PRO_0000091414" description="Elongation factor Tu-2">
    <location>
        <begin position="1"/>
        <end position="397"/>
    </location>
</feature>
<feature type="domain" description="tr-type G">
    <location>
        <begin position="10"/>
        <end position="206"/>
    </location>
</feature>
<feature type="region of interest" description="G1" evidence="1">
    <location>
        <begin position="19"/>
        <end position="26"/>
    </location>
</feature>
<feature type="region of interest" description="G2" evidence="1">
    <location>
        <begin position="62"/>
        <end position="66"/>
    </location>
</feature>
<feature type="region of interest" description="G3" evidence="1">
    <location>
        <begin position="83"/>
        <end position="86"/>
    </location>
</feature>
<feature type="region of interest" description="G4" evidence="1">
    <location>
        <begin position="138"/>
        <end position="141"/>
    </location>
</feature>
<feature type="region of interest" description="G5" evidence="1">
    <location>
        <begin position="176"/>
        <end position="178"/>
    </location>
</feature>
<feature type="binding site" evidence="2">
    <location>
        <begin position="19"/>
        <end position="26"/>
    </location>
    <ligand>
        <name>GTP</name>
        <dbReference type="ChEBI" id="CHEBI:37565"/>
    </ligand>
</feature>
<feature type="binding site" evidence="2">
    <location>
        <position position="26"/>
    </location>
    <ligand>
        <name>Mg(2+)</name>
        <dbReference type="ChEBI" id="CHEBI:18420"/>
    </ligand>
</feature>
<feature type="binding site" evidence="2">
    <location>
        <begin position="83"/>
        <end position="87"/>
    </location>
    <ligand>
        <name>GTP</name>
        <dbReference type="ChEBI" id="CHEBI:37565"/>
    </ligand>
</feature>
<feature type="binding site" evidence="2">
    <location>
        <begin position="138"/>
        <end position="141"/>
    </location>
    <ligand>
        <name>GTP</name>
        <dbReference type="ChEBI" id="CHEBI:37565"/>
    </ligand>
</feature>